<comment type="function">
    <text evidence="1">Core subunit of the mitochondrial membrane respiratory chain NADH dehydrogenase (Complex I) which catalyzes electron transfer from NADH through the respiratory chain, using ubiquinone as an electron acceptor. Essential for the catalytic activity and assembly of complex I.</text>
</comment>
<comment type="catalytic activity">
    <reaction evidence="1">
        <text>a ubiquinone + NADH + 5 H(+)(in) = a ubiquinol + NAD(+) + 4 H(+)(out)</text>
        <dbReference type="Rhea" id="RHEA:29091"/>
        <dbReference type="Rhea" id="RHEA-COMP:9565"/>
        <dbReference type="Rhea" id="RHEA-COMP:9566"/>
        <dbReference type="ChEBI" id="CHEBI:15378"/>
        <dbReference type="ChEBI" id="CHEBI:16389"/>
        <dbReference type="ChEBI" id="CHEBI:17976"/>
        <dbReference type="ChEBI" id="CHEBI:57540"/>
        <dbReference type="ChEBI" id="CHEBI:57945"/>
        <dbReference type="EC" id="7.1.1.2"/>
    </reaction>
</comment>
<comment type="subunit">
    <text evidence="4">Core subunit of respiratory chain NADH dehydrogenase (Complex I) which is composed of 45 different subunits.</text>
</comment>
<comment type="subcellular location">
    <subcellularLocation>
        <location evidence="3">Mitochondrion inner membrane</location>
        <topology evidence="2">Multi-pass membrane protein</topology>
    </subcellularLocation>
</comment>
<comment type="mass spectrometry"/>
<comment type="similarity">
    <text evidence="5">Belongs to the complex I subunit 4 family.</text>
</comment>
<organism>
    <name type="scientific">Bos taurus</name>
    <name type="common">Bovine</name>
    <dbReference type="NCBI Taxonomy" id="9913"/>
    <lineage>
        <taxon>Eukaryota</taxon>
        <taxon>Metazoa</taxon>
        <taxon>Chordata</taxon>
        <taxon>Craniata</taxon>
        <taxon>Vertebrata</taxon>
        <taxon>Euteleostomi</taxon>
        <taxon>Mammalia</taxon>
        <taxon>Eutheria</taxon>
        <taxon>Laurasiatheria</taxon>
        <taxon>Artiodactyla</taxon>
        <taxon>Ruminantia</taxon>
        <taxon>Pecora</taxon>
        <taxon>Bovidae</taxon>
        <taxon>Bovinae</taxon>
        <taxon>Bos</taxon>
    </lineage>
</organism>
<reference key="1">
    <citation type="journal article" date="1982" name="J. Mol. Biol.">
        <title>Complete sequence of bovine mitochondrial DNA. Conserved features of the mammalian mitochondrial genome.</title>
        <authorList>
            <person name="Anderson S."/>
            <person name="de Bruijn M.H.L."/>
            <person name="Coulson A.R."/>
            <person name="Eperon I.C."/>
            <person name="Sanger F."/>
            <person name="Young I.G."/>
        </authorList>
    </citation>
    <scope>NUCLEOTIDE SEQUENCE [GENOMIC DNA]</scope>
    <source>
        <strain evidence="6">Hereford</strain>
        <tissue>Heart</tissue>
    </source>
</reference>
<reference key="2">
    <citation type="submission" date="2002-03" db="EMBL/GenBank/DDBJ databases">
        <title>Bos taurus mitochondrial protein coding regions.</title>
        <authorList>
            <person name="Wettstein P.J."/>
        </authorList>
    </citation>
    <scope>NUCLEOTIDE SEQUENCE [GENOMIC DNA]</scope>
    <source>
        <strain>65</strain>
        <strain>66</strain>
        <strain>D</strain>
        <strain>F</strain>
    </source>
</reference>
<reference key="3">
    <citation type="journal article" date="2006" name="Proc. Natl. Acad. Sci. U.S.A.">
        <title>Definition of the mitochondrial proteome by measurement of molecular masses of membrane proteins.</title>
        <authorList>
            <person name="Carroll J."/>
            <person name="Fearnley I.M."/>
            <person name="Walker J.E."/>
        </authorList>
    </citation>
    <scope>SUBCELLULAR LOCATION</scope>
    <scope>FORMYLATION AT MET-1</scope>
    <scope>MASS SPECTROMETRY</scope>
</reference>
<reference key="4">
    <citation type="journal article" date="2014" name="Nature">
        <title>Architecture of mammalian respiratory complex I.</title>
        <authorList>
            <person name="Vinothkumar K.R."/>
            <person name="Zhu J."/>
            <person name="Hirst J."/>
        </authorList>
    </citation>
    <scope>SUBUNIT</scope>
    <scope>SUBCELLULAR LOCATION</scope>
</reference>
<feature type="chain" id="PRO_0000117906" description="NADH-ubiquinone oxidoreductase chain 4">
    <location>
        <begin position="1"/>
        <end position="459"/>
    </location>
</feature>
<feature type="transmembrane region" description="Helical" evidence="2">
    <location>
        <begin position="22"/>
        <end position="42"/>
    </location>
</feature>
<feature type="transmembrane region" description="Helical" evidence="2">
    <location>
        <begin position="60"/>
        <end position="80"/>
    </location>
</feature>
<feature type="transmembrane region" description="Helical" evidence="2">
    <location>
        <begin position="94"/>
        <end position="112"/>
    </location>
</feature>
<feature type="transmembrane region" description="Helical" evidence="2">
    <location>
        <begin position="116"/>
        <end position="138"/>
    </location>
</feature>
<feature type="transmembrane region" description="Helical" evidence="2">
    <location>
        <begin position="147"/>
        <end position="167"/>
    </location>
</feature>
<feature type="transmembrane region" description="Helical" evidence="2">
    <location>
        <begin position="196"/>
        <end position="216"/>
    </location>
</feature>
<feature type="transmembrane region" description="Helical" evidence="2">
    <location>
        <begin position="224"/>
        <end position="244"/>
    </location>
</feature>
<feature type="transmembrane region" description="Helical" evidence="2">
    <location>
        <begin position="256"/>
        <end position="276"/>
    </location>
</feature>
<feature type="transmembrane region" description="Helical" evidence="2">
    <location>
        <begin position="284"/>
        <end position="303"/>
    </location>
</feature>
<feature type="transmembrane region" description="Helical" evidence="2">
    <location>
        <begin position="308"/>
        <end position="330"/>
    </location>
</feature>
<feature type="transmembrane region" description="Helical" evidence="2">
    <location>
        <begin position="351"/>
        <end position="371"/>
    </location>
</feature>
<feature type="transmembrane region" description="Helical" evidence="2">
    <location>
        <begin position="393"/>
        <end position="413"/>
    </location>
</feature>
<feature type="transmembrane region" description="Helical" evidence="2">
    <location>
        <begin position="435"/>
        <end position="455"/>
    </location>
</feature>
<feature type="modified residue" description="N-formylmethionine" evidence="3">
    <location>
        <position position="1"/>
    </location>
</feature>
<feature type="helix" evidence="7">
    <location>
        <begin position="2"/>
        <end position="17"/>
    </location>
</feature>
<feature type="helix" evidence="7">
    <location>
        <begin position="20"/>
        <end position="22"/>
    </location>
</feature>
<feature type="helix" evidence="7">
    <location>
        <begin position="23"/>
        <end position="37"/>
    </location>
</feature>
<feature type="helix" evidence="7">
    <location>
        <begin position="38"/>
        <end position="42"/>
    </location>
</feature>
<feature type="strand" evidence="7">
    <location>
        <begin position="46"/>
        <end position="48"/>
    </location>
</feature>
<feature type="strand" evidence="7">
    <location>
        <begin position="53"/>
        <end position="58"/>
    </location>
</feature>
<feature type="helix" evidence="7">
    <location>
        <begin position="62"/>
        <end position="80"/>
    </location>
</feature>
<feature type="turn" evidence="7">
    <location>
        <begin position="81"/>
        <end position="86"/>
    </location>
</feature>
<feature type="helix" evidence="7">
    <location>
        <begin position="89"/>
        <end position="111"/>
    </location>
</feature>
<feature type="strand" evidence="7">
    <location>
        <begin position="112"/>
        <end position="114"/>
    </location>
</feature>
<feature type="helix" evidence="7">
    <location>
        <begin position="115"/>
        <end position="124"/>
    </location>
</feature>
<feature type="helix" evidence="7">
    <location>
        <begin position="126"/>
        <end position="136"/>
    </location>
</feature>
<feature type="helix" evidence="7">
    <location>
        <begin position="141"/>
        <end position="171"/>
    </location>
</feature>
<feature type="helix" evidence="7">
    <location>
        <begin position="176"/>
        <end position="182"/>
    </location>
</feature>
<feature type="helix" evidence="7">
    <location>
        <begin position="190"/>
        <end position="206"/>
    </location>
</feature>
<feature type="helix" evidence="7">
    <location>
        <begin position="215"/>
        <end position="222"/>
    </location>
</feature>
<feature type="helix" evidence="7">
    <location>
        <begin position="225"/>
        <end position="233"/>
    </location>
</feature>
<feature type="helix" evidence="7">
    <location>
        <begin position="235"/>
        <end position="246"/>
    </location>
</feature>
<feature type="helix" evidence="7">
    <location>
        <begin position="247"/>
        <end position="249"/>
    </location>
</feature>
<feature type="turn" evidence="7">
    <location>
        <begin position="251"/>
        <end position="253"/>
    </location>
</feature>
<feature type="helix" evidence="7">
    <location>
        <begin position="254"/>
        <end position="257"/>
    </location>
</feature>
<feature type="helix" evidence="7">
    <location>
        <begin position="259"/>
        <end position="277"/>
    </location>
</feature>
<feature type="helix" evidence="7">
    <location>
        <begin position="282"/>
        <end position="303"/>
    </location>
</feature>
<feature type="helix" evidence="7">
    <location>
        <begin position="306"/>
        <end position="337"/>
    </location>
</feature>
<feature type="strand" evidence="7">
    <location>
        <begin position="341"/>
        <end position="345"/>
    </location>
</feature>
<feature type="helix" evidence="7">
    <location>
        <begin position="348"/>
        <end position="351"/>
    </location>
</feature>
<feature type="helix" evidence="7">
    <location>
        <begin position="353"/>
        <end position="366"/>
    </location>
</feature>
<feature type="helix" evidence="7">
    <location>
        <begin position="373"/>
        <end position="388"/>
    </location>
</feature>
<feature type="helix" evidence="7">
    <location>
        <begin position="392"/>
        <end position="415"/>
    </location>
</feature>
<feature type="strand" evidence="8">
    <location>
        <begin position="416"/>
        <end position="418"/>
    </location>
</feature>
<feature type="helix" evidence="7">
    <location>
        <begin position="431"/>
        <end position="446"/>
    </location>
</feature>
<feature type="helix" evidence="7">
    <location>
        <begin position="447"/>
        <end position="449"/>
    </location>
</feature>
<feature type="helix" evidence="7">
    <location>
        <begin position="451"/>
        <end position="454"/>
    </location>
</feature>
<feature type="helix" evidence="9">
    <location>
        <begin position="456"/>
        <end position="458"/>
    </location>
</feature>
<protein>
    <recommendedName>
        <fullName>NADH-ubiquinone oxidoreductase chain 4</fullName>
        <ecNumber evidence="1">7.1.1.2</ecNumber>
    </recommendedName>
    <alternativeName>
        <fullName>NADH dehydrogenase subunit 4</fullName>
    </alternativeName>
</protein>
<name>NU4M_BOVIN</name>
<keyword id="KW-0002">3D-structure</keyword>
<keyword id="KW-0249">Electron transport</keyword>
<keyword id="KW-0291">Formylation</keyword>
<keyword id="KW-0472">Membrane</keyword>
<keyword id="KW-0496">Mitochondrion</keyword>
<keyword id="KW-0999">Mitochondrion inner membrane</keyword>
<keyword id="KW-0520">NAD</keyword>
<keyword id="KW-1185">Reference proteome</keyword>
<keyword id="KW-0679">Respiratory chain</keyword>
<keyword id="KW-1278">Translocase</keyword>
<keyword id="KW-0812">Transmembrane</keyword>
<keyword id="KW-1133">Transmembrane helix</keyword>
<keyword id="KW-0813">Transport</keyword>
<keyword id="KW-0830">Ubiquinone</keyword>
<proteinExistence type="evidence at protein level"/>
<geneLocation type="mitochondrion"/>
<gene>
    <name type="primary">MT-ND4</name>
    <name type="synonym">MTND4</name>
    <name type="synonym">NADH4</name>
    <name type="synonym">ND4</name>
</gene>
<evidence type="ECO:0000250" key="1">
    <source>
        <dbReference type="UniProtKB" id="P03905"/>
    </source>
</evidence>
<evidence type="ECO:0000255" key="2"/>
<evidence type="ECO:0000269" key="3">
    <source>
    </source>
</evidence>
<evidence type="ECO:0000269" key="4">
    <source>
    </source>
</evidence>
<evidence type="ECO:0000305" key="5"/>
<evidence type="ECO:0000312" key="6">
    <source>
        <dbReference type="Proteomes" id="UP000009136"/>
    </source>
</evidence>
<evidence type="ECO:0007829" key="7">
    <source>
        <dbReference type="PDB" id="7QSM"/>
    </source>
</evidence>
<evidence type="ECO:0007829" key="8">
    <source>
        <dbReference type="PDB" id="7QSO"/>
    </source>
</evidence>
<evidence type="ECO:0007829" key="9">
    <source>
        <dbReference type="PDB" id="8Q47"/>
    </source>
</evidence>
<dbReference type="EC" id="7.1.1.2" evidence="1"/>
<dbReference type="EMBL" id="V00654">
    <property type="protein sequence ID" value="CAA24009.1"/>
    <property type="status" value="ALT_SEQ"/>
    <property type="molecule type" value="Genomic_DNA"/>
</dbReference>
<dbReference type="EMBL" id="AF490528">
    <property type="protein sequence ID" value="AAM08326.1"/>
    <property type="status" value="ALT_SEQ"/>
    <property type="molecule type" value="Genomic_DNA"/>
</dbReference>
<dbReference type="EMBL" id="AF490529">
    <property type="protein sequence ID" value="AAM08339.1"/>
    <property type="status" value="ALT_SEQ"/>
    <property type="molecule type" value="Genomic_DNA"/>
</dbReference>
<dbReference type="EMBL" id="AF493541">
    <property type="protein sequence ID" value="AAM12798.1"/>
    <property type="status" value="ALT_SEQ"/>
    <property type="molecule type" value="Genomic_DNA"/>
</dbReference>
<dbReference type="EMBL" id="AF493542">
    <property type="protein sequence ID" value="AAM12811.1"/>
    <property type="status" value="ALT_SEQ"/>
    <property type="molecule type" value="Genomic_DNA"/>
</dbReference>
<dbReference type="PIR" id="A00439">
    <property type="entry name" value="QXBO4M"/>
</dbReference>
<dbReference type="RefSeq" id="YP_209214.1">
    <property type="nucleotide sequence ID" value="NC_006853.1"/>
</dbReference>
<dbReference type="PDB" id="5LC5">
    <property type="method" value="EM"/>
    <property type="resolution" value="4.35 A"/>
    <property type="chains" value="M=3-459"/>
</dbReference>
<dbReference type="PDB" id="5LDW">
    <property type="method" value="EM"/>
    <property type="resolution" value="4.27 A"/>
    <property type="chains" value="M=1-459"/>
</dbReference>
<dbReference type="PDB" id="5LDX">
    <property type="method" value="EM"/>
    <property type="resolution" value="5.60 A"/>
    <property type="chains" value="M=1-459"/>
</dbReference>
<dbReference type="PDB" id="5O31">
    <property type="method" value="EM"/>
    <property type="resolution" value="4.13 A"/>
    <property type="chains" value="M=1-459"/>
</dbReference>
<dbReference type="PDB" id="7DGQ">
    <property type="method" value="EM"/>
    <property type="resolution" value="5.00 A"/>
    <property type="chains" value="4=1-459"/>
</dbReference>
<dbReference type="PDB" id="7DGR">
    <property type="method" value="EM"/>
    <property type="resolution" value="4.60 A"/>
    <property type="chains" value="4=1-459"/>
</dbReference>
<dbReference type="PDB" id="7DGS">
    <property type="method" value="EM"/>
    <property type="resolution" value="7.80 A"/>
    <property type="chains" value="4=1-459"/>
</dbReference>
<dbReference type="PDB" id="7DGZ">
    <property type="method" value="EM"/>
    <property type="resolution" value="3.80 A"/>
    <property type="chains" value="4=1-459"/>
</dbReference>
<dbReference type="PDB" id="7DH0">
    <property type="method" value="EM"/>
    <property type="resolution" value="4.20 A"/>
    <property type="chains" value="4=1-459"/>
</dbReference>
<dbReference type="PDB" id="7DKF">
    <property type="method" value="EM"/>
    <property type="resolution" value="8.30 A"/>
    <property type="chains" value="42=1-459"/>
</dbReference>
<dbReference type="PDB" id="7QSD">
    <property type="method" value="EM"/>
    <property type="resolution" value="3.10 A"/>
    <property type="chains" value="M=1-459"/>
</dbReference>
<dbReference type="PDB" id="7QSK">
    <property type="method" value="EM"/>
    <property type="resolution" value="2.84 A"/>
    <property type="chains" value="M=1-459"/>
</dbReference>
<dbReference type="PDB" id="7QSL">
    <property type="method" value="EM"/>
    <property type="resolution" value="2.76 A"/>
    <property type="chains" value="M=1-459"/>
</dbReference>
<dbReference type="PDB" id="7QSM">
    <property type="method" value="EM"/>
    <property type="resolution" value="2.30 A"/>
    <property type="chains" value="M=1-459"/>
</dbReference>
<dbReference type="PDB" id="7QSN">
    <property type="method" value="EM"/>
    <property type="resolution" value="2.81 A"/>
    <property type="chains" value="M=1-459"/>
</dbReference>
<dbReference type="PDB" id="7QSO">
    <property type="method" value="EM"/>
    <property type="resolution" value="3.02 A"/>
    <property type="chains" value="M=1-459"/>
</dbReference>
<dbReference type="PDB" id="7R41">
    <property type="method" value="EM"/>
    <property type="resolution" value="2.30 A"/>
    <property type="chains" value="M=1-459"/>
</dbReference>
<dbReference type="PDB" id="7R42">
    <property type="method" value="EM"/>
    <property type="resolution" value="2.30 A"/>
    <property type="chains" value="M=1-459"/>
</dbReference>
<dbReference type="PDB" id="7R43">
    <property type="method" value="EM"/>
    <property type="resolution" value="2.40 A"/>
    <property type="chains" value="M=1-459"/>
</dbReference>
<dbReference type="PDB" id="7R44">
    <property type="method" value="EM"/>
    <property type="resolution" value="2.40 A"/>
    <property type="chains" value="M=1-459"/>
</dbReference>
<dbReference type="PDB" id="7R45">
    <property type="method" value="EM"/>
    <property type="resolution" value="2.40 A"/>
    <property type="chains" value="M=1-459"/>
</dbReference>
<dbReference type="PDB" id="7R46">
    <property type="method" value="EM"/>
    <property type="resolution" value="2.40 A"/>
    <property type="chains" value="M=1-459"/>
</dbReference>
<dbReference type="PDB" id="7R47">
    <property type="method" value="EM"/>
    <property type="resolution" value="2.30 A"/>
    <property type="chains" value="M=1-459"/>
</dbReference>
<dbReference type="PDB" id="7R48">
    <property type="method" value="EM"/>
    <property type="resolution" value="2.30 A"/>
    <property type="chains" value="M=1-459"/>
</dbReference>
<dbReference type="PDB" id="7R4C">
    <property type="method" value="EM"/>
    <property type="resolution" value="2.30 A"/>
    <property type="chains" value="M=1-459"/>
</dbReference>
<dbReference type="PDB" id="7R4D">
    <property type="method" value="EM"/>
    <property type="resolution" value="2.30 A"/>
    <property type="chains" value="M=1-459"/>
</dbReference>
<dbReference type="PDB" id="7R4F">
    <property type="method" value="EM"/>
    <property type="resolution" value="2.40 A"/>
    <property type="chains" value="M=1-459"/>
</dbReference>
<dbReference type="PDB" id="7R4G">
    <property type="method" value="EM"/>
    <property type="resolution" value="2.50 A"/>
    <property type="chains" value="M=1-459"/>
</dbReference>
<dbReference type="PDB" id="8Q0A">
    <property type="method" value="EM"/>
    <property type="resolution" value="3.10 A"/>
    <property type="chains" value="M=1-459"/>
</dbReference>
<dbReference type="PDB" id="8Q0F">
    <property type="method" value="EM"/>
    <property type="resolution" value="3.10 A"/>
    <property type="chains" value="M=1-459"/>
</dbReference>
<dbReference type="PDB" id="8Q0J">
    <property type="method" value="EM"/>
    <property type="resolution" value="3.80 A"/>
    <property type="chains" value="M=1-459"/>
</dbReference>
<dbReference type="PDB" id="8Q0M">
    <property type="method" value="EM"/>
    <property type="resolution" value="3.10 A"/>
    <property type="chains" value="M=1-459"/>
</dbReference>
<dbReference type="PDB" id="8Q0O">
    <property type="method" value="EM"/>
    <property type="resolution" value="3.10 A"/>
    <property type="chains" value="M=1-459"/>
</dbReference>
<dbReference type="PDB" id="8Q0Q">
    <property type="method" value="EM"/>
    <property type="resolution" value="3.60 A"/>
    <property type="chains" value="M=1-459"/>
</dbReference>
<dbReference type="PDB" id="8Q1P">
    <property type="method" value="EM"/>
    <property type="resolution" value="2.90 A"/>
    <property type="chains" value="M=1-459"/>
</dbReference>
<dbReference type="PDB" id="8Q1U">
    <property type="method" value="EM"/>
    <property type="resolution" value="3.30 A"/>
    <property type="chains" value="M=1-459"/>
</dbReference>
<dbReference type="PDB" id="8Q1Y">
    <property type="method" value="EM"/>
    <property type="resolution" value="2.60 A"/>
    <property type="chains" value="M=1-459"/>
</dbReference>
<dbReference type="PDB" id="8Q25">
    <property type="method" value="EM"/>
    <property type="resolution" value="2.80 A"/>
    <property type="chains" value="M=1-459"/>
</dbReference>
<dbReference type="PDB" id="8Q45">
    <property type="method" value="EM"/>
    <property type="resolution" value="2.70 A"/>
    <property type="chains" value="M=1-459"/>
</dbReference>
<dbReference type="PDB" id="8Q46">
    <property type="method" value="EM"/>
    <property type="resolution" value="2.60 A"/>
    <property type="chains" value="M=1-459"/>
</dbReference>
<dbReference type="PDB" id="8Q47">
    <property type="method" value="EM"/>
    <property type="resolution" value="2.90 A"/>
    <property type="chains" value="M=1-459"/>
</dbReference>
<dbReference type="PDB" id="8Q48">
    <property type="method" value="EM"/>
    <property type="resolution" value="2.50 A"/>
    <property type="chains" value="M=1-459"/>
</dbReference>
<dbReference type="PDB" id="8Q49">
    <property type="method" value="EM"/>
    <property type="resolution" value="2.60 A"/>
    <property type="chains" value="M=1-459"/>
</dbReference>
<dbReference type="PDB" id="8Q4A">
    <property type="method" value="EM"/>
    <property type="resolution" value="2.60 A"/>
    <property type="chains" value="M=1-459"/>
</dbReference>
<dbReference type="PDBsum" id="5LC5"/>
<dbReference type="PDBsum" id="5LDW"/>
<dbReference type="PDBsum" id="5LDX"/>
<dbReference type="PDBsum" id="5O31"/>
<dbReference type="PDBsum" id="7DGQ"/>
<dbReference type="PDBsum" id="7DGR"/>
<dbReference type="PDBsum" id="7DGS"/>
<dbReference type="PDBsum" id="7DGZ"/>
<dbReference type="PDBsum" id="7DH0"/>
<dbReference type="PDBsum" id="7DKF"/>
<dbReference type="PDBsum" id="7QSD"/>
<dbReference type="PDBsum" id="7QSK"/>
<dbReference type="PDBsum" id="7QSL"/>
<dbReference type="PDBsum" id="7QSM"/>
<dbReference type="PDBsum" id="7QSN"/>
<dbReference type="PDBsum" id="7QSO"/>
<dbReference type="PDBsum" id="7R41"/>
<dbReference type="PDBsum" id="7R42"/>
<dbReference type="PDBsum" id="7R43"/>
<dbReference type="PDBsum" id="7R44"/>
<dbReference type="PDBsum" id="7R45"/>
<dbReference type="PDBsum" id="7R46"/>
<dbReference type="PDBsum" id="7R47"/>
<dbReference type="PDBsum" id="7R48"/>
<dbReference type="PDBsum" id="7R4C"/>
<dbReference type="PDBsum" id="7R4D"/>
<dbReference type="PDBsum" id="7R4F"/>
<dbReference type="PDBsum" id="7R4G"/>
<dbReference type="PDBsum" id="8Q0A"/>
<dbReference type="PDBsum" id="8Q0F"/>
<dbReference type="PDBsum" id="8Q0J"/>
<dbReference type="PDBsum" id="8Q0M"/>
<dbReference type="PDBsum" id="8Q0O"/>
<dbReference type="PDBsum" id="8Q0Q"/>
<dbReference type="PDBsum" id="8Q1P"/>
<dbReference type="PDBsum" id="8Q1U"/>
<dbReference type="PDBsum" id="8Q1Y"/>
<dbReference type="PDBsum" id="8Q25"/>
<dbReference type="PDBsum" id="8Q45"/>
<dbReference type="PDBsum" id="8Q46"/>
<dbReference type="PDBsum" id="8Q47"/>
<dbReference type="PDBsum" id="8Q48"/>
<dbReference type="PDBsum" id="8Q49"/>
<dbReference type="PDBsum" id="8Q4A"/>
<dbReference type="EMDB" id="EMD-14127"/>
<dbReference type="EMDB" id="EMD-14132"/>
<dbReference type="EMDB" id="EMD-14133"/>
<dbReference type="EMDB" id="EMD-14134"/>
<dbReference type="EMDB" id="EMD-14139"/>
<dbReference type="EMDB" id="EMD-14140"/>
<dbReference type="EMDB" id="EMD-14251"/>
<dbReference type="EMDB" id="EMD-14256"/>
<dbReference type="EMDB" id="EMD-14261"/>
<dbReference type="EMDB" id="EMD-14266"/>
<dbReference type="EMDB" id="EMD-14272"/>
<dbReference type="EMDB" id="EMD-14277"/>
<dbReference type="EMDB" id="EMD-14282"/>
<dbReference type="EMDB" id="EMD-14287"/>
<dbReference type="EMDB" id="EMD-14292"/>
<dbReference type="EMDB" id="EMD-14297"/>
<dbReference type="EMDB" id="EMD-14302"/>
<dbReference type="EMDB" id="EMD-14307"/>
<dbReference type="EMDB" id="EMD-18051"/>
<dbReference type="EMDB" id="EMD-18052"/>
<dbReference type="EMDB" id="EMD-18054"/>
<dbReference type="EMDB" id="EMD-18055"/>
<dbReference type="EMDB" id="EMD-18057"/>
<dbReference type="EMDB" id="EMD-18059"/>
<dbReference type="EMDB" id="EMD-18066"/>
<dbReference type="EMDB" id="EMD-18067"/>
<dbReference type="EMDB" id="EMD-18068"/>
<dbReference type="EMDB" id="EMD-18069"/>
<dbReference type="EMDB" id="EMD-18138"/>
<dbReference type="EMDB" id="EMD-18139"/>
<dbReference type="EMDB" id="EMD-18140"/>
<dbReference type="EMDB" id="EMD-18141"/>
<dbReference type="EMDB" id="EMD-18142"/>
<dbReference type="EMDB" id="EMD-18143"/>
<dbReference type="EMDB" id="EMD-30673"/>
<dbReference type="EMDB" id="EMD-30674"/>
<dbReference type="EMDB" id="EMD-30675"/>
<dbReference type="EMDB" id="EMD-30676"/>
<dbReference type="EMDB" id="EMD-30677"/>
<dbReference type="EMDB" id="EMD-30706"/>
<dbReference type="EMDB" id="EMD-3731"/>
<dbReference type="EMDB" id="EMD-4032"/>
<dbReference type="EMDB" id="EMD-4040"/>
<dbReference type="EMDB" id="EMD-4041"/>
<dbReference type="SMR" id="P03910"/>
<dbReference type="CORUM" id="P03910"/>
<dbReference type="DIP" id="DIP-38798N"/>
<dbReference type="FunCoup" id="P03910">
    <property type="interactions" value="183"/>
</dbReference>
<dbReference type="IntAct" id="P03910">
    <property type="interactions" value="1"/>
</dbReference>
<dbReference type="STRING" id="9913.ENSBTAP00000053150"/>
<dbReference type="TCDB" id="3.D.1.6.1">
    <property type="family name" value="the h+ or na+-translocating nadh dehydrogenase (ndh) family"/>
</dbReference>
<dbReference type="PaxDb" id="9913-ENSBTAP00000053150"/>
<dbReference type="Ensembl" id="ENSBTAT00000060552.1">
    <property type="protein sequence ID" value="ENSBTAP00000053150.1"/>
    <property type="gene ID" value="ENSBTAG00000043577.1"/>
</dbReference>
<dbReference type="GeneID" id="3283886"/>
<dbReference type="KEGG" id="bta:3283886"/>
<dbReference type="CTD" id="4538"/>
<dbReference type="VEuPathDB" id="HostDB:ENSBTAG00000043577"/>
<dbReference type="VGNC" id="VGNC:55743">
    <property type="gene designation" value="MT-ND4"/>
</dbReference>
<dbReference type="eggNOG" id="KOG4845">
    <property type="taxonomic scope" value="Eukaryota"/>
</dbReference>
<dbReference type="GeneTree" id="ENSGT00730000111316"/>
<dbReference type="HOGENOM" id="CLU_007100_4_0_1"/>
<dbReference type="InParanoid" id="P03910"/>
<dbReference type="OMA" id="ITRWGNQ"/>
<dbReference type="OrthoDB" id="564260at2759"/>
<dbReference type="TreeFam" id="TF343520"/>
<dbReference type="Reactome" id="R-BTA-611105">
    <property type="pathway name" value="Respiratory electron transport"/>
</dbReference>
<dbReference type="Reactome" id="R-BTA-6799198">
    <property type="pathway name" value="Complex I biogenesis"/>
</dbReference>
<dbReference type="Proteomes" id="UP000009136">
    <property type="component" value="Mitochondrion MT"/>
</dbReference>
<dbReference type="Bgee" id="ENSBTAG00000043577">
    <property type="expression patterns" value="Expressed in occipital lobe and 103 other cell types or tissues"/>
</dbReference>
<dbReference type="GO" id="GO:0005743">
    <property type="term" value="C:mitochondrial inner membrane"/>
    <property type="evidence" value="ECO:0000314"/>
    <property type="project" value="UniProtKB"/>
</dbReference>
<dbReference type="GO" id="GO:0045271">
    <property type="term" value="C:respiratory chain complex I"/>
    <property type="evidence" value="ECO:0000314"/>
    <property type="project" value="UniProtKB"/>
</dbReference>
<dbReference type="GO" id="GO:0008137">
    <property type="term" value="F:NADH dehydrogenase (ubiquinone) activity"/>
    <property type="evidence" value="ECO:0000250"/>
    <property type="project" value="UniProtKB"/>
</dbReference>
<dbReference type="GO" id="GO:0048039">
    <property type="term" value="F:ubiquinone binding"/>
    <property type="evidence" value="ECO:0000318"/>
    <property type="project" value="GO_Central"/>
</dbReference>
<dbReference type="GO" id="GO:0009060">
    <property type="term" value="P:aerobic respiration"/>
    <property type="evidence" value="ECO:0000318"/>
    <property type="project" value="GO_Central"/>
</dbReference>
<dbReference type="GO" id="GO:0015990">
    <property type="term" value="P:electron transport coupled proton transport"/>
    <property type="evidence" value="ECO:0000318"/>
    <property type="project" value="GO_Central"/>
</dbReference>
<dbReference type="GO" id="GO:0006120">
    <property type="term" value="P:mitochondrial electron transport, NADH to ubiquinone"/>
    <property type="evidence" value="ECO:0000250"/>
    <property type="project" value="UniProtKB"/>
</dbReference>
<dbReference type="GO" id="GO:0032981">
    <property type="term" value="P:mitochondrial respiratory chain complex I assembly"/>
    <property type="evidence" value="ECO:0000250"/>
    <property type="project" value="UniProtKB"/>
</dbReference>
<dbReference type="InterPro" id="IPR000260">
    <property type="entry name" value="NADH4_N"/>
</dbReference>
<dbReference type="InterPro" id="IPR010227">
    <property type="entry name" value="NADH_Q_OxRdtase_chainM/4"/>
</dbReference>
<dbReference type="InterPro" id="IPR003918">
    <property type="entry name" value="NADH_UbQ_OxRdtase"/>
</dbReference>
<dbReference type="InterPro" id="IPR001750">
    <property type="entry name" value="ND/Mrp_TM"/>
</dbReference>
<dbReference type="NCBIfam" id="TIGR01972">
    <property type="entry name" value="NDH_I_M"/>
    <property type="match status" value="1"/>
</dbReference>
<dbReference type="PANTHER" id="PTHR43507">
    <property type="entry name" value="NADH-UBIQUINONE OXIDOREDUCTASE CHAIN 4"/>
    <property type="match status" value="1"/>
</dbReference>
<dbReference type="PANTHER" id="PTHR43507:SF20">
    <property type="entry name" value="NADH-UBIQUINONE OXIDOREDUCTASE CHAIN 4"/>
    <property type="match status" value="1"/>
</dbReference>
<dbReference type="Pfam" id="PF01059">
    <property type="entry name" value="Oxidored_q5_N"/>
    <property type="match status" value="1"/>
</dbReference>
<dbReference type="Pfam" id="PF00361">
    <property type="entry name" value="Proton_antipo_M"/>
    <property type="match status" value="1"/>
</dbReference>
<dbReference type="PRINTS" id="PR01437">
    <property type="entry name" value="NUOXDRDTASE4"/>
</dbReference>
<sequence>MLKYIIPTIMLMPLTWLSKNNMIWVNSTAHSLLISFTSLLLMNQFGDNSLNFSLLFFSDSLSTPLLILTMWLLPLMLMASQHHLSKENLTRKKLFITMLISLQLFLIMTFTAMELILFYILFEATLVPTLIIITRWGNQTERLNAGLYFLFYTLAGSLPLLVALIYIQNTVGSLNFLMLQYWVQPVHNSWSNVFMWLACMMAFMVKMPLYGLHLWLPKAHVEAPIAGSMVLAAVLLKLGGYGMLRITLILNPMTDFMAYPFIMLSLWGMIMTSSICLRQTDLKSLIAYSSVSHMALVIVAILIQTPWSYMGATALMIAHGLTSSMLFCLANSNYERIHSRTMILARGLQTLLPLMATWWLLASLTNLALPPTINLIGELFVVMSTFSWSNITIILMGVNMVITALYSLYMLIMTQRGKYTYHINNISPSFTRENALMSLHILPLLLLTLNPKIILGPLY</sequence>
<accession>P03910</accession>
<accession>Q8SE30</accession>